<protein>
    <recommendedName>
        <fullName evidence="4">RING finger protein 225</fullName>
    </recommendedName>
</protein>
<gene>
    <name evidence="4" type="primary">Rnf225</name>
</gene>
<feature type="chain" id="PRO_0000431310" description="RING finger protein 225">
    <location>
        <begin position="1"/>
        <end position="332"/>
    </location>
</feature>
<feature type="transmembrane region" description="Helical" evidence="1">
    <location>
        <begin position="205"/>
        <end position="225"/>
    </location>
</feature>
<feature type="zinc finger region" description="RING-type" evidence="2">
    <location>
        <begin position="63"/>
        <end position="111"/>
    </location>
</feature>
<feature type="region of interest" description="Disordered" evidence="3">
    <location>
        <begin position="1"/>
        <end position="55"/>
    </location>
</feature>
<feature type="region of interest" description="Disordered" evidence="3">
    <location>
        <begin position="121"/>
        <end position="187"/>
    </location>
</feature>
<feature type="region of interest" description="Disordered" evidence="3">
    <location>
        <begin position="259"/>
        <end position="332"/>
    </location>
</feature>
<feature type="compositionally biased region" description="Low complexity" evidence="3">
    <location>
        <begin position="15"/>
        <end position="27"/>
    </location>
</feature>
<feature type="compositionally biased region" description="Acidic residues" evidence="3">
    <location>
        <begin position="36"/>
        <end position="46"/>
    </location>
</feature>
<feature type="compositionally biased region" description="Basic and acidic residues" evidence="3">
    <location>
        <begin position="280"/>
        <end position="295"/>
    </location>
</feature>
<feature type="compositionally biased region" description="Basic and acidic residues" evidence="3">
    <location>
        <begin position="323"/>
        <end position="332"/>
    </location>
</feature>
<organism>
    <name type="scientific">Mus musculus</name>
    <name type="common">Mouse</name>
    <dbReference type="NCBI Taxonomy" id="10090"/>
    <lineage>
        <taxon>Eukaryota</taxon>
        <taxon>Metazoa</taxon>
        <taxon>Chordata</taxon>
        <taxon>Craniata</taxon>
        <taxon>Vertebrata</taxon>
        <taxon>Euteleostomi</taxon>
        <taxon>Mammalia</taxon>
        <taxon>Eutheria</taxon>
        <taxon>Euarchontoglires</taxon>
        <taxon>Glires</taxon>
        <taxon>Rodentia</taxon>
        <taxon>Myomorpha</taxon>
        <taxon>Muroidea</taxon>
        <taxon>Muridae</taxon>
        <taxon>Murinae</taxon>
        <taxon>Mus</taxon>
        <taxon>Mus</taxon>
    </lineage>
</organism>
<comment type="subcellular location">
    <subcellularLocation>
        <location evidence="1">Membrane</location>
        <topology evidence="1">Single-pass membrane protein</topology>
    </subcellularLocation>
</comment>
<sequence>MPCPRLPWLRRHRTSQGSGPSSPSTVSAPNSPSRGEDEDAEEEEGDGTPGSGPILPPTSPMECLICVSPFDGIFKLPKRLDCGHVFCLECLARLSLATAGGGDAVACPMCRAPTRLAPRRGLPALPTQPGLLPRDARAPLPRQGSVRFDRRRGLLYLRPPPPSPGPRKSRTVRAPPPPPPLRLGRPLSRRLSLSSPAWAFNAAVALAVLVAAGLVVSGVYIFFLIPHVTNSGVRPQTVALAPENDFWVSPRPTPVAPWTHAWTRRPTKPDLDLDDTLPEATKDTPELEEATKDPVETQGIPDLPPDQTPKAEIDLNWNPKAQADGKKVQLQQ</sequence>
<name>RN225_MOUSE</name>
<proteinExistence type="evidence at transcript level"/>
<dbReference type="EMBL" id="AK009344">
    <property type="protein sequence ID" value="BAB26231.1"/>
    <property type="molecule type" value="mRNA"/>
</dbReference>
<dbReference type="EMBL" id="AK028523">
    <property type="protein sequence ID" value="BAC25989.1"/>
    <property type="molecule type" value="mRNA"/>
</dbReference>
<dbReference type="EMBL" id="AC107704">
    <property type="status" value="NOT_ANNOTATED_CDS"/>
    <property type="molecule type" value="Genomic_DNA"/>
</dbReference>
<dbReference type="EMBL" id="CH466634">
    <property type="protein sequence ID" value="EDL38091.1"/>
    <property type="molecule type" value="Genomic_DNA"/>
</dbReference>
<dbReference type="EMBL" id="BC141220">
    <property type="protein sequence ID" value="AAI41221.1"/>
    <property type="molecule type" value="mRNA"/>
</dbReference>
<dbReference type="CCDS" id="CCDS20818.1"/>
<dbReference type="RefSeq" id="NP_084085.1">
    <property type="nucleotide sequence ID" value="NM_029809.2"/>
</dbReference>
<dbReference type="GlyGen" id="Q9D7D1">
    <property type="glycosylation" value="1 site"/>
</dbReference>
<dbReference type="iPTMnet" id="Q9D7D1"/>
<dbReference type="PhosphoSitePlus" id="Q9D7D1"/>
<dbReference type="PaxDb" id="10090-ENSMUSP00000042816"/>
<dbReference type="ProteomicsDB" id="300551"/>
<dbReference type="DNASU" id="381845"/>
<dbReference type="Ensembl" id="ENSMUST00000045870.5">
    <property type="protein sequence ID" value="ENSMUSP00000042816.5"/>
    <property type="gene ID" value="ENSMUSG00000033967.5"/>
</dbReference>
<dbReference type="GeneID" id="381845"/>
<dbReference type="KEGG" id="mmu:381845"/>
<dbReference type="UCSC" id="uc009feq.1">
    <property type="organism name" value="mouse"/>
</dbReference>
<dbReference type="AGR" id="MGI:1924198"/>
<dbReference type="CTD" id="646862"/>
<dbReference type="MGI" id="MGI:1924198">
    <property type="gene designation" value="Rnf225"/>
</dbReference>
<dbReference type="VEuPathDB" id="HostDB:ENSMUSG00000033967"/>
<dbReference type="eggNOG" id="KOG2177">
    <property type="taxonomic scope" value="Eukaryota"/>
</dbReference>
<dbReference type="GeneTree" id="ENSGT00940000163974"/>
<dbReference type="HOGENOM" id="CLU_1013832_0_0_1"/>
<dbReference type="InParanoid" id="Q9D7D1"/>
<dbReference type="OMA" id="WVFNAAV"/>
<dbReference type="OrthoDB" id="342730at2759"/>
<dbReference type="PhylomeDB" id="Q9D7D1"/>
<dbReference type="TreeFam" id="TF336325"/>
<dbReference type="BioGRID-ORCS" id="381845">
    <property type="hits" value="4 hits in 78 CRISPR screens"/>
</dbReference>
<dbReference type="PRO" id="PR:Q9D7D1"/>
<dbReference type="Proteomes" id="UP000000589">
    <property type="component" value="Chromosome 7"/>
</dbReference>
<dbReference type="RNAct" id="Q9D7D1">
    <property type="molecule type" value="protein"/>
</dbReference>
<dbReference type="Bgee" id="ENSMUSG00000033967">
    <property type="expression patterns" value="Expressed in esophagus and 38 other cell types or tissues"/>
</dbReference>
<dbReference type="GO" id="GO:0016020">
    <property type="term" value="C:membrane"/>
    <property type="evidence" value="ECO:0007669"/>
    <property type="project" value="UniProtKB-SubCell"/>
</dbReference>
<dbReference type="GO" id="GO:0008270">
    <property type="term" value="F:zinc ion binding"/>
    <property type="evidence" value="ECO:0007669"/>
    <property type="project" value="UniProtKB-KW"/>
</dbReference>
<dbReference type="CDD" id="cd16556">
    <property type="entry name" value="RING-HC_RNF183-like"/>
    <property type="match status" value="1"/>
</dbReference>
<dbReference type="Gene3D" id="3.30.40.10">
    <property type="entry name" value="Zinc/RING finger domain, C3HC4 (zinc finger)"/>
    <property type="match status" value="1"/>
</dbReference>
<dbReference type="InterPro" id="IPR051435">
    <property type="entry name" value="RING_finger_E3_ubiq-ligases"/>
</dbReference>
<dbReference type="InterPro" id="IPR027370">
    <property type="entry name" value="Znf-RING_euk"/>
</dbReference>
<dbReference type="InterPro" id="IPR001841">
    <property type="entry name" value="Znf_RING"/>
</dbReference>
<dbReference type="InterPro" id="IPR013083">
    <property type="entry name" value="Znf_RING/FYVE/PHD"/>
</dbReference>
<dbReference type="InterPro" id="IPR017907">
    <property type="entry name" value="Znf_RING_CS"/>
</dbReference>
<dbReference type="PANTHER" id="PTHR22791:SF1">
    <property type="entry name" value="RING FINGER PROTEIN 225"/>
    <property type="match status" value="1"/>
</dbReference>
<dbReference type="PANTHER" id="PTHR22791">
    <property type="entry name" value="RING-TYPE DOMAIN-CONTAINING PROTEIN"/>
    <property type="match status" value="1"/>
</dbReference>
<dbReference type="Pfam" id="PF13445">
    <property type="entry name" value="zf-RING_UBOX"/>
    <property type="match status" value="1"/>
</dbReference>
<dbReference type="SMART" id="SM00184">
    <property type="entry name" value="RING"/>
    <property type="match status" value="1"/>
</dbReference>
<dbReference type="SUPFAM" id="SSF57850">
    <property type="entry name" value="RING/U-box"/>
    <property type="match status" value="1"/>
</dbReference>
<dbReference type="PROSITE" id="PS00518">
    <property type="entry name" value="ZF_RING_1"/>
    <property type="match status" value="1"/>
</dbReference>
<dbReference type="PROSITE" id="PS50089">
    <property type="entry name" value="ZF_RING_2"/>
    <property type="match status" value="1"/>
</dbReference>
<reference key="1">
    <citation type="journal article" date="2005" name="Science">
        <title>The transcriptional landscape of the mammalian genome.</title>
        <authorList>
            <person name="Carninci P."/>
            <person name="Kasukawa T."/>
            <person name="Katayama S."/>
            <person name="Gough J."/>
            <person name="Frith M.C."/>
            <person name="Maeda N."/>
            <person name="Oyama R."/>
            <person name="Ravasi T."/>
            <person name="Lenhard B."/>
            <person name="Wells C."/>
            <person name="Kodzius R."/>
            <person name="Shimokawa K."/>
            <person name="Bajic V.B."/>
            <person name="Brenner S.E."/>
            <person name="Batalov S."/>
            <person name="Forrest A.R."/>
            <person name="Zavolan M."/>
            <person name="Davis M.J."/>
            <person name="Wilming L.G."/>
            <person name="Aidinis V."/>
            <person name="Allen J.E."/>
            <person name="Ambesi-Impiombato A."/>
            <person name="Apweiler R."/>
            <person name="Aturaliya R.N."/>
            <person name="Bailey T.L."/>
            <person name="Bansal M."/>
            <person name="Baxter L."/>
            <person name="Beisel K.W."/>
            <person name="Bersano T."/>
            <person name="Bono H."/>
            <person name="Chalk A.M."/>
            <person name="Chiu K.P."/>
            <person name="Choudhary V."/>
            <person name="Christoffels A."/>
            <person name="Clutterbuck D.R."/>
            <person name="Crowe M.L."/>
            <person name="Dalla E."/>
            <person name="Dalrymple B.P."/>
            <person name="de Bono B."/>
            <person name="Della Gatta G."/>
            <person name="di Bernardo D."/>
            <person name="Down T."/>
            <person name="Engstrom P."/>
            <person name="Fagiolini M."/>
            <person name="Faulkner G."/>
            <person name="Fletcher C.F."/>
            <person name="Fukushima T."/>
            <person name="Furuno M."/>
            <person name="Futaki S."/>
            <person name="Gariboldi M."/>
            <person name="Georgii-Hemming P."/>
            <person name="Gingeras T.R."/>
            <person name="Gojobori T."/>
            <person name="Green R.E."/>
            <person name="Gustincich S."/>
            <person name="Harbers M."/>
            <person name="Hayashi Y."/>
            <person name="Hensch T.K."/>
            <person name="Hirokawa N."/>
            <person name="Hill D."/>
            <person name="Huminiecki L."/>
            <person name="Iacono M."/>
            <person name="Ikeo K."/>
            <person name="Iwama A."/>
            <person name="Ishikawa T."/>
            <person name="Jakt M."/>
            <person name="Kanapin A."/>
            <person name="Katoh M."/>
            <person name="Kawasawa Y."/>
            <person name="Kelso J."/>
            <person name="Kitamura H."/>
            <person name="Kitano H."/>
            <person name="Kollias G."/>
            <person name="Krishnan S.P."/>
            <person name="Kruger A."/>
            <person name="Kummerfeld S.K."/>
            <person name="Kurochkin I.V."/>
            <person name="Lareau L.F."/>
            <person name="Lazarevic D."/>
            <person name="Lipovich L."/>
            <person name="Liu J."/>
            <person name="Liuni S."/>
            <person name="McWilliam S."/>
            <person name="Madan Babu M."/>
            <person name="Madera M."/>
            <person name="Marchionni L."/>
            <person name="Matsuda H."/>
            <person name="Matsuzawa S."/>
            <person name="Miki H."/>
            <person name="Mignone F."/>
            <person name="Miyake S."/>
            <person name="Morris K."/>
            <person name="Mottagui-Tabar S."/>
            <person name="Mulder N."/>
            <person name="Nakano N."/>
            <person name="Nakauchi H."/>
            <person name="Ng P."/>
            <person name="Nilsson R."/>
            <person name="Nishiguchi S."/>
            <person name="Nishikawa S."/>
            <person name="Nori F."/>
            <person name="Ohara O."/>
            <person name="Okazaki Y."/>
            <person name="Orlando V."/>
            <person name="Pang K.C."/>
            <person name="Pavan W.J."/>
            <person name="Pavesi G."/>
            <person name="Pesole G."/>
            <person name="Petrovsky N."/>
            <person name="Piazza S."/>
            <person name="Reed J."/>
            <person name="Reid J.F."/>
            <person name="Ring B.Z."/>
            <person name="Ringwald M."/>
            <person name="Rost B."/>
            <person name="Ruan Y."/>
            <person name="Salzberg S.L."/>
            <person name="Sandelin A."/>
            <person name="Schneider C."/>
            <person name="Schoenbach C."/>
            <person name="Sekiguchi K."/>
            <person name="Semple C.A."/>
            <person name="Seno S."/>
            <person name="Sessa L."/>
            <person name="Sheng Y."/>
            <person name="Shibata Y."/>
            <person name="Shimada H."/>
            <person name="Shimada K."/>
            <person name="Silva D."/>
            <person name="Sinclair B."/>
            <person name="Sperling S."/>
            <person name="Stupka E."/>
            <person name="Sugiura K."/>
            <person name="Sultana R."/>
            <person name="Takenaka Y."/>
            <person name="Taki K."/>
            <person name="Tammoja K."/>
            <person name="Tan S.L."/>
            <person name="Tang S."/>
            <person name="Taylor M.S."/>
            <person name="Tegner J."/>
            <person name="Teichmann S.A."/>
            <person name="Ueda H.R."/>
            <person name="van Nimwegen E."/>
            <person name="Verardo R."/>
            <person name="Wei C.L."/>
            <person name="Yagi K."/>
            <person name="Yamanishi H."/>
            <person name="Zabarovsky E."/>
            <person name="Zhu S."/>
            <person name="Zimmer A."/>
            <person name="Hide W."/>
            <person name="Bult C."/>
            <person name="Grimmond S.M."/>
            <person name="Teasdale R.D."/>
            <person name="Liu E.T."/>
            <person name="Brusic V."/>
            <person name="Quackenbush J."/>
            <person name="Wahlestedt C."/>
            <person name="Mattick J.S."/>
            <person name="Hume D.A."/>
            <person name="Kai C."/>
            <person name="Sasaki D."/>
            <person name="Tomaru Y."/>
            <person name="Fukuda S."/>
            <person name="Kanamori-Katayama M."/>
            <person name="Suzuki M."/>
            <person name="Aoki J."/>
            <person name="Arakawa T."/>
            <person name="Iida J."/>
            <person name="Imamura K."/>
            <person name="Itoh M."/>
            <person name="Kato T."/>
            <person name="Kawaji H."/>
            <person name="Kawagashira N."/>
            <person name="Kawashima T."/>
            <person name="Kojima M."/>
            <person name="Kondo S."/>
            <person name="Konno H."/>
            <person name="Nakano K."/>
            <person name="Ninomiya N."/>
            <person name="Nishio T."/>
            <person name="Okada M."/>
            <person name="Plessy C."/>
            <person name="Shibata K."/>
            <person name="Shiraki T."/>
            <person name="Suzuki S."/>
            <person name="Tagami M."/>
            <person name="Waki K."/>
            <person name="Watahiki A."/>
            <person name="Okamura-Oho Y."/>
            <person name="Suzuki H."/>
            <person name="Kawai J."/>
            <person name="Hayashizaki Y."/>
        </authorList>
    </citation>
    <scope>NUCLEOTIDE SEQUENCE [LARGE SCALE MRNA]</scope>
    <source>
        <strain>C57BL/6J</strain>
        <tissue>Skin</tissue>
        <tissue>Tongue</tissue>
    </source>
</reference>
<reference key="2">
    <citation type="journal article" date="2009" name="PLoS Biol.">
        <title>Lineage-specific biology revealed by a finished genome assembly of the mouse.</title>
        <authorList>
            <person name="Church D.M."/>
            <person name="Goodstadt L."/>
            <person name="Hillier L.W."/>
            <person name="Zody M.C."/>
            <person name="Goldstein S."/>
            <person name="She X."/>
            <person name="Bult C.J."/>
            <person name="Agarwala R."/>
            <person name="Cherry J.L."/>
            <person name="DiCuccio M."/>
            <person name="Hlavina W."/>
            <person name="Kapustin Y."/>
            <person name="Meric P."/>
            <person name="Maglott D."/>
            <person name="Birtle Z."/>
            <person name="Marques A.C."/>
            <person name="Graves T."/>
            <person name="Zhou S."/>
            <person name="Teague B."/>
            <person name="Potamousis K."/>
            <person name="Churas C."/>
            <person name="Place M."/>
            <person name="Herschleb J."/>
            <person name="Runnheim R."/>
            <person name="Forrest D."/>
            <person name="Amos-Landgraf J."/>
            <person name="Schwartz D.C."/>
            <person name="Cheng Z."/>
            <person name="Lindblad-Toh K."/>
            <person name="Eichler E.E."/>
            <person name="Ponting C.P."/>
        </authorList>
    </citation>
    <scope>NUCLEOTIDE SEQUENCE [LARGE SCALE GENOMIC DNA]</scope>
    <source>
        <strain>C57BL/6J</strain>
    </source>
</reference>
<reference key="3">
    <citation type="submission" date="2005-09" db="EMBL/GenBank/DDBJ databases">
        <authorList>
            <person name="Mural R.J."/>
            <person name="Adams M.D."/>
            <person name="Myers E.W."/>
            <person name="Smith H.O."/>
            <person name="Venter J.C."/>
        </authorList>
    </citation>
    <scope>NUCLEOTIDE SEQUENCE [LARGE SCALE GENOMIC DNA]</scope>
</reference>
<reference key="4">
    <citation type="journal article" date="2004" name="Genome Res.">
        <title>The status, quality, and expansion of the NIH full-length cDNA project: the Mammalian Gene Collection (MGC).</title>
        <authorList>
            <consortium name="The MGC Project Team"/>
        </authorList>
    </citation>
    <scope>NUCLEOTIDE SEQUENCE [LARGE SCALE MRNA]</scope>
    <source>
        <tissue>Brain</tissue>
    </source>
</reference>
<keyword id="KW-0472">Membrane</keyword>
<keyword id="KW-0479">Metal-binding</keyword>
<keyword id="KW-1185">Reference proteome</keyword>
<keyword id="KW-0812">Transmembrane</keyword>
<keyword id="KW-1133">Transmembrane helix</keyword>
<keyword id="KW-0862">Zinc</keyword>
<keyword id="KW-0863">Zinc-finger</keyword>
<evidence type="ECO:0000255" key="1"/>
<evidence type="ECO:0000255" key="2">
    <source>
        <dbReference type="PROSITE-ProRule" id="PRU00175"/>
    </source>
</evidence>
<evidence type="ECO:0000256" key="3">
    <source>
        <dbReference type="SAM" id="MobiDB-lite"/>
    </source>
</evidence>
<evidence type="ECO:0000305" key="4"/>
<accession>Q9D7D1</accession>